<sequence length="287" mass="31850">MLARFPLYLRLVRMDKPIGSLLLLWPTLNALWIASDGHPRWPLLVIFSLGTLLMRSAGCAMNDYADRDFDRHVKRTADRPLTSGKIRAWEAIAIAVGLAFVSFLLILPLNTLTKQLSVVALFVAGSYPFMKRFFAIPQAYLGIAFGFGIPMAFAAVQDTVPTIAWVMLIANIFWSVAYDTEYAMVDRDDDIKIGIRTSALTFGRFDVAAVMLCYAVTLGIYVWIGVTLGFGLAYWAGWAAAVGCALYHYTLIKDRERMPCFAAFRHNNWLGGVLFAGIAAHYLLAGS</sequence>
<gene>
    <name evidence="1" type="primary">ubiA</name>
    <name type="ordered locus">Bcep18194_A3815</name>
</gene>
<reference key="1">
    <citation type="submission" date="2005-10" db="EMBL/GenBank/DDBJ databases">
        <title>Complete sequence of chromosome 1 of Burkholderia sp. 383.</title>
        <authorList>
            <consortium name="US DOE Joint Genome Institute"/>
            <person name="Copeland A."/>
            <person name="Lucas S."/>
            <person name="Lapidus A."/>
            <person name="Barry K."/>
            <person name="Detter J.C."/>
            <person name="Glavina T."/>
            <person name="Hammon N."/>
            <person name="Israni S."/>
            <person name="Pitluck S."/>
            <person name="Chain P."/>
            <person name="Malfatti S."/>
            <person name="Shin M."/>
            <person name="Vergez L."/>
            <person name="Schmutz J."/>
            <person name="Larimer F."/>
            <person name="Land M."/>
            <person name="Kyrpides N."/>
            <person name="Lykidis A."/>
            <person name="Richardson P."/>
        </authorList>
    </citation>
    <scope>NUCLEOTIDE SEQUENCE [LARGE SCALE GENOMIC DNA]</scope>
    <source>
        <strain>ATCC 17760 / DSM 23089 / LMG 22485 / NCIMB 9086 / R18194 / 383</strain>
    </source>
</reference>
<comment type="function">
    <text evidence="1">Catalyzes the prenylation of para-hydroxybenzoate (PHB) with an all-trans polyprenyl group. Mediates the second step in the final reaction sequence of ubiquinone-8 (UQ-8) biosynthesis, which is the condensation of the polyisoprenoid side chain with PHB, generating the first membrane-bound Q intermediate 3-octaprenyl-4-hydroxybenzoate.</text>
</comment>
<comment type="catalytic activity">
    <reaction evidence="1">
        <text>all-trans-octaprenyl diphosphate + 4-hydroxybenzoate = 4-hydroxy-3-(all-trans-octaprenyl)benzoate + diphosphate</text>
        <dbReference type="Rhea" id="RHEA:27782"/>
        <dbReference type="ChEBI" id="CHEBI:1617"/>
        <dbReference type="ChEBI" id="CHEBI:17879"/>
        <dbReference type="ChEBI" id="CHEBI:33019"/>
        <dbReference type="ChEBI" id="CHEBI:57711"/>
        <dbReference type="EC" id="2.5.1.39"/>
    </reaction>
</comment>
<comment type="cofactor">
    <cofactor evidence="1">
        <name>Mg(2+)</name>
        <dbReference type="ChEBI" id="CHEBI:18420"/>
    </cofactor>
</comment>
<comment type="pathway">
    <text evidence="1">Cofactor biosynthesis; ubiquinone biosynthesis.</text>
</comment>
<comment type="subcellular location">
    <subcellularLocation>
        <location evidence="1">Cell inner membrane</location>
        <topology evidence="1">Multi-pass membrane protein</topology>
    </subcellularLocation>
</comment>
<comment type="similarity">
    <text evidence="1">Belongs to the UbiA prenyltransferase family.</text>
</comment>
<keyword id="KW-0997">Cell inner membrane</keyword>
<keyword id="KW-1003">Cell membrane</keyword>
<keyword id="KW-0460">Magnesium</keyword>
<keyword id="KW-0472">Membrane</keyword>
<keyword id="KW-0808">Transferase</keyword>
<keyword id="KW-0812">Transmembrane</keyword>
<keyword id="KW-1133">Transmembrane helix</keyword>
<keyword id="KW-0831">Ubiquinone biosynthesis</keyword>
<accession>Q39JF0</accession>
<name>UBIA_BURL3</name>
<organism>
    <name type="scientific">Burkholderia lata (strain ATCC 17760 / DSM 23089 / LMG 22485 / NCIMB 9086 / R18194 / 383)</name>
    <dbReference type="NCBI Taxonomy" id="482957"/>
    <lineage>
        <taxon>Bacteria</taxon>
        <taxon>Pseudomonadati</taxon>
        <taxon>Pseudomonadota</taxon>
        <taxon>Betaproteobacteria</taxon>
        <taxon>Burkholderiales</taxon>
        <taxon>Burkholderiaceae</taxon>
        <taxon>Burkholderia</taxon>
        <taxon>Burkholderia cepacia complex</taxon>
    </lineage>
</organism>
<protein>
    <recommendedName>
        <fullName evidence="1">4-hydroxybenzoate octaprenyltransferase</fullName>
        <ecNumber evidence="1">2.5.1.39</ecNumber>
    </recommendedName>
    <alternativeName>
        <fullName evidence="1">4-HB polyprenyltransferase</fullName>
    </alternativeName>
</protein>
<evidence type="ECO:0000255" key="1">
    <source>
        <dbReference type="HAMAP-Rule" id="MF_01635"/>
    </source>
</evidence>
<feature type="chain" id="PRO_0000262785" description="4-hydroxybenzoate octaprenyltransferase">
    <location>
        <begin position="1"/>
        <end position="287"/>
    </location>
</feature>
<feature type="transmembrane region" description="Helical" evidence="1">
    <location>
        <begin position="41"/>
        <end position="61"/>
    </location>
</feature>
<feature type="transmembrane region" description="Helical" evidence="1">
    <location>
        <begin position="89"/>
        <end position="109"/>
    </location>
</feature>
<feature type="transmembrane region" description="Helical" evidence="1">
    <location>
        <begin position="133"/>
        <end position="153"/>
    </location>
</feature>
<feature type="transmembrane region" description="Helical" evidence="1">
    <location>
        <begin position="158"/>
        <end position="178"/>
    </location>
</feature>
<feature type="transmembrane region" description="Helical" evidence="1">
    <location>
        <begin position="202"/>
        <end position="224"/>
    </location>
</feature>
<feature type="transmembrane region" description="Helical" evidence="1">
    <location>
        <begin position="267"/>
        <end position="287"/>
    </location>
</feature>
<dbReference type="EC" id="2.5.1.39" evidence="1"/>
<dbReference type="EMBL" id="CP000151">
    <property type="protein sequence ID" value="ABB07416.1"/>
    <property type="molecule type" value="Genomic_DNA"/>
</dbReference>
<dbReference type="RefSeq" id="WP_011351002.1">
    <property type="nucleotide sequence ID" value="NC_007510.1"/>
</dbReference>
<dbReference type="SMR" id="Q39JF0"/>
<dbReference type="GeneID" id="45093727"/>
<dbReference type="KEGG" id="bur:Bcep18194_A3815"/>
<dbReference type="PATRIC" id="fig|482957.22.peg.681"/>
<dbReference type="HOGENOM" id="CLU_034879_1_0_4"/>
<dbReference type="UniPathway" id="UPA00232"/>
<dbReference type="Proteomes" id="UP000002705">
    <property type="component" value="Chromosome 1"/>
</dbReference>
<dbReference type="GO" id="GO:0005886">
    <property type="term" value="C:plasma membrane"/>
    <property type="evidence" value="ECO:0007669"/>
    <property type="project" value="UniProtKB-SubCell"/>
</dbReference>
<dbReference type="GO" id="GO:0008412">
    <property type="term" value="F:4-hydroxybenzoate polyprenyltransferase activity"/>
    <property type="evidence" value="ECO:0007669"/>
    <property type="project" value="UniProtKB-UniRule"/>
</dbReference>
<dbReference type="GO" id="GO:0006744">
    <property type="term" value="P:ubiquinone biosynthetic process"/>
    <property type="evidence" value="ECO:0007669"/>
    <property type="project" value="UniProtKB-UniRule"/>
</dbReference>
<dbReference type="CDD" id="cd13959">
    <property type="entry name" value="PT_UbiA_COQ2"/>
    <property type="match status" value="1"/>
</dbReference>
<dbReference type="FunFam" id="1.10.357.140:FF:000002">
    <property type="entry name" value="4-hydroxybenzoate octaprenyltransferase"/>
    <property type="match status" value="1"/>
</dbReference>
<dbReference type="FunFam" id="1.20.120.1780:FF:000001">
    <property type="entry name" value="4-hydroxybenzoate octaprenyltransferase"/>
    <property type="match status" value="1"/>
</dbReference>
<dbReference type="Gene3D" id="1.10.357.140">
    <property type="entry name" value="UbiA prenyltransferase"/>
    <property type="match status" value="1"/>
</dbReference>
<dbReference type="Gene3D" id="1.20.120.1780">
    <property type="entry name" value="UbiA prenyltransferase"/>
    <property type="match status" value="1"/>
</dbReference>
<dbReference type="HAMAP" id="MF_01635">
    <property type="entry name" value="UbiA"/>
    <property type="match status" value="1"/>
</dbReference>
<dbReference type="InterPro" id="IPR006370">
    <property type="entry name" value="HB_polyprenyltransferase-like"/>
</dbReference>
<dbReference type="InterPro" id="IPR039653">
    <property type="entry name" value="Prenyltransferase"/>
</dbReference>
<dbReference type="InterPro" id="IPR000537">
    <property type="entry name" value="UbiA_prenyltransferase"/>
</dbReference>
<dbReference type="InterPro" id="IPR030470">
    <property type="entry name" value="UbiA_prenylTrfase_CS"/>
</dbReference>
<dbReference type="InterPro" id="IPR044878">
    <property type="entry name" value="UbiA_sf"/>
</dbReference>
<dbReference type="NCBIfam" id="TIGR01474">
    <property type="entry name" value="ubiA_proteo"/>
    <property type="match status" value="1"/>
</dbReference>
<dbReference type="PANTHER" id="PTHR11048:SF28">
    <property type="entry name" value="4-HYDROXYBENZOATE POLYPRENYLTRANSFERASE, MITOCHONDRIAL"/>
    <property type="match status" value="1"/>
</dbReference>
<dbReference type="PANTHER" id="PTHR11048">
    <property type="entry name" value="PRENYLTRANSFERASES"/>
    <property type="match status" value="1"/>
</dbReference>
<dbReference type="Pfam" id="PF01040">
    <property type="entry name" value="UbiA"/>
    <property type="match status" value="1"/>
</dbReference>
<dbReference type="PROSITE" id="PS00943">
    <property type="entry name" value="UBIA"/>
    <property type="match status" value="1"/>
</dbReference>
<proteinExistence type="inferred from homology"/>